<dbReference type="EC" id="2.8.1.6" evidence="1"/>
<dbReference type="EMBL" id="CP000891">
    <property type="protein sequence ID" value="ABX48966.1"/>
    <property type="molecule type" value="Genomic_DNA"/>
</dbReference>
<dbReference type="RefSeq" id="WP_006081265.1">
    <property type="nucleotide sequence ID" value="NC_009997.1"/>
</dbReference>
<dbReference type="SMR" id="A9KY60"/>
<dbReference type="GeneID" id="11772018"/>
<dbReference type="KEGG" id="sbn:Sbal195_1795"/>
<dbReference type="HOGENOM" id="CLU_033172_1_2_6"/>
<dbReference type="UniPathway" id="UPA00078">
    <property type="reaction ID" value="UER00162"/>
</dbReference>
<dbReference type="Proteomes" id="UP000000770">
    <property type="component" value="Chromosome"/>
</dbReference>
<dbReference type="GO" id="GO:0051537">
    <property type="term" value="F:2 iron, 2 sulfur cluster binding"/>
    <property type="evidence" value="ECO:0007669"/>
    <property type="project" value="UniProtKB-KW"/>
</dbReference>
<dbReference type="GO" id="GO:0051539">
    <property type="term" value="F:4 iron, 4 sulfur cluster binding"/>
    <property type="evidence" value="ECO:0007669"/>
    <property type="project" value="UniProtKB-KW"/>
</dbReference>
<dbReference type="GO" id="GO:0004076">
    <property type="term" value="F:biotin synthase activity"/>
    <property type="evidence" value="ECO:0007669"/>
    <property type="project" value="UniProtKB-UniRule"/>
</dbReference>
<dbReference type="GO" id="GO:0005506">
    <property type="term" value="F:iron ion binding"/>
    <property type="evidence" value="ECO:0007669"/>
    <property type="project" value="UniProtKB-UniRule"/>
</dbReference>
<dbReference type="GO" id="GO:0009102">
    <property type="term" value="P:biotin biosynthetic process"/>
    <property type="evidence" value="ECO:0007669"/>
    <property type="project" value="UniProtKB-UniRule"/>
</dbReference>
<dbReference type="CDD" id="cd01335">
    <property type="entry name" value="Radical_SAM"/>
    <property type="match status" value="1"/>
</dbReference>
<dbReference type="FunFam" id="3.20.20.70:FF:000011">
    <property type="entry name" value="Biotin synthase"/>
    <property type="match status" value="1"/>
</dbReference>
<dbReference type="Gene3D" id="3.20.20.70">
    <property type="entry name" value="Aldolase class I"/>
    <property type="match status" value="1"/>
</dbReference>
<dbReference type="HAMAP" id="MF_01694">
    <property type="entry name" value="BioB"/>
    <property type="match status" value="1"/>
</dbReference>
<dbReference type="InterPro" id="IPR013785">
    <property type="entry name" value="Aldolase_TIM"/>
</dbReference>
<dbReference type="InterPro" id="IPR010722">
    <property type="entry name" value="BATS_dom"/>
</dbReference>
<dbReference type="InterPro" id="IPR002684">
    <property type="entry name" value="Biotin_synth/BioAB"/>
</dbReference>
<dbReference type="InterPro" id="IPR024177">
    <property type="entry name" value="Biotin_synthase"/>
</dbReference>
<dbReference type="InterPro" id="IPR006638">
    <property type="entry name" value="Elp3/MiaA/NifB-like_rSAM"/>
</dbReference>
<dbReference type="InterPro" id="IPR007197">
    <property type="entry name" value="rSAM"/>
</dbReference>
<dbReference type="NCBIfam" id="TIGR00433">
    <property type="entry name" value="bioB"/>
    <property type="match status" value="1"/>
</dbReference>
<dbReference type="PANTHER" id="PTHR22976">
    <property type="entry name" value="BIOTIN SYNTHASE"/>
    <property type="match status" value="1"/>
</dbReference>
<dbReference type="PANTHER" id="PTHR22976:SF2">
    <property type="entry name" value="BIOTIN SYNTHASE, MITOCHONDRIAL"/>
    <property type="match status" value="1"/>
</dbReference>
<dbReference type="Pfam" id="PF06968">
    <property type="entry name" value="BATS"/>
    <property type="match status" value="1"/>
</dbReference>
<dbReference type="Pfam" id="PF04055">
    <property type="entry name" value="Radical_SAM"/>
    <property type="match status" value="1"/>
</dbReference>
<dbReference type="PIRSF" id="PIRSF001619">
    <property type="entry name" value="Biotin_synth"/>
    <property type="match status" value="1"/>
</dbReference>
<dbReference type="SFLD" id="SFLDF00272">
    <property type="entry name" value="biotin_synthase"/>
    <property type="match status" value="1"/>
</dbReference>
<dbReference type="SFLD" id="SFLDS00029">
    <property type="entry name" value="Radical_SAM"/>
    <property type="match status" value="1"/>
</dbReference>
<dbReference type="SMART" id="SM00876">
    <property type="entry name" value="BATS"/>
    <property type="match status" value="1"/>
</dbReference>
<dbReference type="SMART" id="SM00729">
    <property type="entry name" value="Elp3"/>
    <property type="match status" value="1"/>
</dbReference>
<dbReference type="SUPFAM" id="SSF102114">
    <property type="entry name" value="Radical SAM enzymes"/>
    <property type="match status" value="1"/>
</dbReference>
<dbReference type="PROSITE" id="PS51918">
    <property type="entry name" value="RADICAL_SAM"/>
    <property type="match status" value="1"/>
</dbReference>
<feature type="chain" id="PRO_0000381616" description="Biotin synthase">
    <location>
        <begin position="1"/>
        <end position="350"/>
    </location>
</feature>
<feature type="domain" description="Radical SAM core" evidence="2">
    <location>
        <begin position="41"/>
        <end position="268"/>
    </location>
</feature>
<feature type="binding site" evidence="1">
    <location>
        <position position="56"/>
    </location>
    <ligand>
        <name>[4Fe-4S] cluster</name>
        <dbReference type="ChEBI" id="CHEBI:49883"/>
        <note>4Fe-4S-S-AdoMet</note>
    </ligand>
</feature>
<feature type="binding site" evidence="1">
    <location>
        <position position="60"/>
    </location>
    <ligand>
        <name>[4Fe-4S] cluster</name>
        <dbReference type="ChEBI" id="CHEBI:49883"/>
        <note>4Fe-4S-S-AdoMet</note>
    </ligand>
</feature>
<feature type="binding site" evidence="1">
    <location>
        <position position="63"/>
    </location>
    <ligand>
        <name>[4Fe-4S] cluster</name>
        <dbReference type="ChEBI" id="CHEBI:49883"/>
        <note>4Fe-4S-S-AdoMet</note>
    </ligand>
</feature>
<feature type="binding site" evidence="1">
    <location>
        <position position="100"/>
    </location>
    <ligand>
        <name>[2Fe-2S] cluster</name>
        <dbReference type="ChEBI" id="CHEBI:190135"/>
    </ligand>
</feature>
<feature type="binding site" evidence="1">
    <location>
        <position position="131"/>
    </location>
    <ligand>
        <name>[2Fe-2S] cluster</name>
        <dbReference type="ChEBI" id="CHEBI:190135"/>
    </ligand>
</feature>
<feature type="binding site" evidence="1">
    <location>
        <position position="191"/>
    </location>
    <ligand>
        <name>[2Fe-2S] cluster</name>
        <dbReference type="ChEBI" id="CHEBI:190135"/>
    </ligand>
</feature>
<feature type="binding site" evidence="1">
    <location>
        <position position="263"/>
    </location>
    <ligand>
        <name>[2Fe-2S] cluster</name>
        <dbReference type="ChEBI" id="CHEBI:190135"/>
    </ligand>
</feature>
<gene>
    <name evidence="1" type="primary">bioB</name>
    <name type="ordered locus">Sbal195_1795</name>
</gene>
<sequence>MSQLQVRHDWKREEIEALFALPMNDLLFKAHSIHREVYDPNEVQISRLLSIKTGACPEDCKYCPQSARYDTGLEKERLLAMETVLTEARSAKAAGASRFCMGAAWRNPKEKDMPYLKQMVQEVKALGMETCMTLGMLSEDQANDLASAGLDYYNHNLDTSPEYYGDVITTRTYQNRLDTLTNVRASGMKVCSGGIVGMGEKATDRAGLLQQLANLPQHPDSVPINMLVKVAGTPFEKLDDLDPLEFVRTIAVARILMPLSRVRLSAGRENMSDELQAMCFFAGANSIFYGCKLLTTPNPEESDDMGLFRRLGLRPEQGAAAKLEEESAVLAKAAAYQDKSSAQFYDAGAL</sequence>
<reference key="1">
    <citation type="submission" date="2007-11" db="EMBL/GenBank/DDBJ databases">
        <title>Complete sequence of chromosome of Shewanella baltica OS195.</title>
        <authorList>
            <consortium name="US DOE Joint Genome Institute"/>
            <person name="Copeland A."/>
            <person name="Lucas S."/>
            <person name="Lapidus A."/>
            <person name="Barry K."/>
            <person name="Glavina del Rio T."/>
            <person name="Dalin E."/>
            <person name="Tice H."/>
            <person name="Pitluck S."/>
            <person name="Chain P."/>
            <person name="Malfatti S."/>
            <person name="Shin M."/>
            <person name="Vergez L."/>
            <person name="Schmutz J."/>
            <person name="Larimer F."/>
            <person name="Land M."/>
            <person name="Hauser L."/>
            <person name="Kyrpides N."/>
            <person name="Kim E."/>
            <person name="Brettar I."/>
            <person name="Rodrigues J."/>
            <person name="Konstantinidis K."/>
            <person name="Klappenbach J."/>
            <person name="Hofle M."/>
            <person name="Tiedje J."/>
            <person name="Richardson P."/>
        </authorList>
    </citation>
    <scope>NUCLEOTIDE SEQUENCE [LARGE SCALE GENOMIC DNA]</scope>
    <source>
        <strain>OS195</strain>
    </source>
</reference>
<accession>A9KY60</accession>
<comment type="function">
    <text evidence="1">Catalyzes the conversion of dethiobiotin (DTB) to biotin by the insertion of a sulfur atom into dethiobiotin via a radical-based mechanism.</text>
</comment>
<comment type="catalytic activity">
    <reaction evidence="1">
        <text>(4R,5S)-dethiobiotin + (sulfur carrier)-SH + 2 reduced [2Fe-2S]-[ferredoxin] + 2 S-adenosyl-L-methionine = (sulfur carrier)-H + biotin + 2 5'-deoxyadenosine + 2 L-methionine + 2 oxidized [2Fe-2S]-[ferredoxin]</text>
        <dbReference type="Rhea" id="RHEA:22060"/>
        <dbReference type="Rhea" id="RHEA-COMP:10000"/>
        <dbReference type="Rhea" id="RHEA-COMP:10001"/>
        <dbReference type="Rhea" id="RHEA-COMP:14737"/>
        <dbReference type="Rhea" id="RHEA-COMP:14739"/>
        <dbReference type="ChEBI" id="CHEBI:17319"/>
        <dbReference type="ChEBI" id="CHEBI:29917"/>
        <dbReference type="ChEBI" id="CHEBI:33737"/>
        <dbReference type="ChEBI" id="CHEBI:33738"/>
        <dbReference type="ChEBI" id="CHEBI:57586"/>
        <dbReference type="ChEBI" id="CHEBI:57844"/>
        <dbReference type="ChEBI" id="CHEBI:59789"/>
        <dbReference type="ChEBI" id="CHEBI:64428"/>
        <dbReference type="ChEBI" id="CHEBI:149473"/>
        <dbReference type="EC" id="2.8.1.6"/>
    </reaction>
</comment>
<comment type="cofactor">
    <cofactor evidence="1">
        <name>[4Fe-4S] cluster</name>
        <dbReference type="ChEBI" id="CHEBI:49883"/>
    </cofactor>
    <text evidence="1">Binds 1 [4Fe-4S] cluster. The cluster is coordinated with 3 cysteines and an exchangeable S-adenosyl-L-methionine.</text>
</comment>
<comment type="cofactor">
    <cofactor evidence="1">
        <name>[2Fe-2S] cluster</name>
        <dbReference type="ChEBI" id="CHEBI:190135"/>
    </cofactor>
    <text evidence="1">Binds 1 [2Fe-2S] cluster. The cluster is coordinated with 3 cysteines and 1 arginine.</text>
</comment>
<comment type="pathway">
    <text evidence="1">Cofactor biosynthesis; biotin biosynthesis; biotin from 7,8-diaminononanoate: step 2/2.</text>
</comment>
<comment type="subunit">
    <text evidence="1">Homodimer.</text>
</comment>
<comment type="similarity">
    <text evidence="1">Belongs to the radical SAM superfamily. Biotin synthase family.</text>
</comment>
<protein>
    <recommendedName>
        <fullName evidence="1">Biotin synthase</fullName>
        <ecNumber evidence="1">2.8.1.6</ecNumber>
    </recommendedName>
</protein>
<organism>
    <name type="scientific">Shewanella baltica (strain OS195)</name>
    <dbReference type="NCBI Taxonomy" id="399599"/>
    <lineage>
        <taxon>Bacteria</taxon>
        <taxon>Pseudomonadati</taxon>
        <taxon>Pseudomonadota</taxon>
        <taxon>Gammaproteobacteria</taxon>
        <taxon>Alteromonadales</taxon>
        <taxon>Shewanellaceae</taxon>
        <taxon>Shewanella</taxon>
    </lineage>
</organism>
<name>BIOB_SHEB9</name>
<keyword id="KW-0001">2Fe-2S</keyword>
<keyword id="KW-0004">4Fe-4S</keyword>
<keyword id="KW-0093">Biotin biosynthesis</keyword>
<keyword id="KW-0408">Iron</keyword>
<keyword id="KW-0411">Iron-sulfur</keyword>
<keyword id="KW-0479">Metal-binding</keyword>
<keyword id="KW-0949">S-adenosyl-L-methionine</keyword>
<keyword id="KW-0808">Transferase</keyword>
<proteinExistence type="inferred from homology"/>
<evidence type="ECO:0000255" key="1">
    <source>
        <dbReference type="HAMAP-Rule" id="MF_01694"/>
    </source>
</evidence>
<evidence type="ECO:0000255" key="2">
    <source>
        <dbReference type="PROSITE-ProRule" id="PRU01266"/>
    </source>
</evidence>